<sequence length="87" mass="9049">MAHKKAGGSSRNGRDSESKRLGVKVYGGQAINAGGIIVRQRGTRMHAGENVGMGKDHTLFALVDGHVKFTTKGAAKKHTVVVVPAAA</sequence>
<keyword id="KW-0687">Ribonucleoprotein</keyword>
<keyword id="KW-0689">Ribosomal protein</keyword>
<name>RL27_BURP1</name>
<comment type="similarity">
    <text evidence="1">Belongs to the bacterial ribosomal protein bL27 family.</text>
</comment>
<reference key="1">
    <citation type="journal article" date="2010" name="Genome Biol. Evol.">
        <title>Continuing evolution of Burkholderia mallei through genome reduction and large-scale rearrangements.</title>
        <authorList>
            <person name="Losada L."/>
            <person name="Ronning C.M."/>
            <person name="DeShazer D."/>
            <person name="Woods D."/>
            <person name="Fedorova N."/>
            <person name="Kim H.S."/>
            <person name="Shabalina S.A."/>
            <person name="Pearson T.R."/>
            <person name="Brinkac L."/>
            <person name="Tan P."/>
            <person name="Nandi T."/>
            <person name="Crabtree J."/>
            <person name="Badger J."/>
            <person name="Beckstrom-Sternberg S."/>
            <person name="Saqib M."/>
            <person name="Schutzer S.E."/>
            <person name="Keim P."/>
            <person name="Nierman W.C."/>
        </authorList>
    </citation>
    <scope>NUCLEOTIDE SEQUENCE [LARGE SCALE GENOMIC DNA]</scope>
    <source>
        <strain>1710b</strain>
    </source>
</reference>
<gene>
    <name evidence="1" type="primary">rpmA</name>
    <name type="ordered locus">BURPS1710b_3523</name>
</gene>
<protein>
    <recommendedName>
        <fullName evidence="1">Large ribosomal subunit protein bL27</fullName>
    </recommendedName>
    <alternativeName>
        <fullName evidence="3">50S ribosomal protein L27</fullName>
    </alternativeName>
</protein>
<organism>
    <name type="scientific">Burkholderia pseudomallei (strain 1710b)</name>
    <dbReference type="NCBI Taxonomy" id="320372"/>
    <lineage>
        <taxon>Bacteria</taxon>
        <taxon>Pseudomonadati</taxon>
        <taxon>Pseudomonadota</taxon>
        <taxon>Betaproteobacteria</taxon>
        <taxon>Burkholderiales</taxon>
        <taxon>Burkholderiaceae</taxon>
        <taxon>Burkholderia</taxon>
        <taxon>pseudomallei group</taxon>
    </lineage>
</organism>
<accession>Q3JNF9</accession>
<dbReference type="EMBL" id="CP000124">
    <property type="protein sequence ID" value="ABA49870.1"/>
    <property type="molecule type" value="Genomic_DNA"/>
</dbReference>
<dbReference type="RefSeq" id="WP_004194025.1">
    <property type="nucleotide sequence ID" value="NC_007434.1"/>
</dbReference>
<dbReference type="SMR" id="Q3JNF9"/>
<dbReference type="EnsemblBacteria" id="ABA49870">
    <property type="protein sequence ID" value="ABA49870"/>
    <property type="gene ID" value="BURPS1710b_3523"/>
</dbReference>
<dbReference type="GeneID" id="93061604"/>
<dbReference type="KEGG" id="bpm:BURPS1710b_3523"/>
<dbReference type="HOGENOM" id="CLU_095424_4_1_4"/>
<dbReference type="Proteomes" id="UP000002700">
    <property type="component" value="Chromosome I"/>
</dbReference>
<dbReference type="GO" id="GO:0022625">
    <property type="term" value="C:cytosolic large ribosomal subunit"/>
    <property type="evidence" value="ECO:0007669"/>
    <property type="project" value="TreeGrafter"/>
</dbReference>
<dbReference type="GO" id="GO:0003735">
    <property type="term" value="F:structural constituent of ribosome"/>
    <property type="evidence" value="ECO:0007669"/>
    <property type="project" value="InterPro"/>
</dbReference>
<dbReference type="GO" id="GO:0006412">
    <property type="term" value="P:translation"/>
    <property type="evidence" value="ECO:0007669"/>
    <property type="project" value="UniProtKB-UniRule"/>
</dbReference>
<dbReference type="FunFam" id="2.40.50.100:FF:000001">
    <property type="entry name" value="50S ribosomal protein L27"/>
    <property type="match status" value="1"/>
</dbReference>
<dbReference type="Gene3D" id="2.40.50.100">
    <property type="match status" value="1"/>
</dbReference>
<dbReference type="HAMAP" id="MF_00539">
    <property type="entry name" value="Ribosomal_bL27"/>
    <property type="match status" value="1"/>
</dbReference>
<dbReference type="InterPro" id="IPR001684">
    <property type="entry name" value="Ribosomal_bL27"/>
</dbReference>
<dbReference type="InterPro" id="IPR018261">
    <property type="entry name" value="Ribosomal_bL27_CS"/>
</dbReference>
<dbReference type="NCBIfam" id="TIGR00062">
    <property type="entry name" value="L27"/>
    <property type="match status" value="1"/>
</dbReference>
<dbReference type="PANTHER" id="PTHR15893:SF0">
    <property type="entry name" value="LARGE RIBOSOMAL SUBUNIT PROTEIN BL27M"/>
    <property type="match status" value="1"/>
</dbReference>
<dbReference type="PANTHER" id="PTHR15893">
    <property type="entry name" value="RIBOSOMAL PROTEIN L27"/>
    <property type="match status" value="1"/>
</dbReference>
<dbReference type="Pfam" id="PF01016">
    <property type="entry name" value="Ribosomal_L27"/>
    <property type="match status" value="1"/>
</dbReference>
<dbReference type="PRINTS" id="PR00063">
    <property type="entry name" value="RIBOSOMALL27"/>
</dbReference>
<dbReference type="SUPFAM" id="SSF110324">
    <property type="entry name" value="Ribosomal L27 protein-like"/>
    <property type="match status" value="1"/>
</dbReference>
<dbReference type="PROSITE" id="PS00831">
    <property type="entry name" value="RIBOSOMAL_L27"/>
    <property type="match status" value="1"/>
</dbReference>
<proteinExistence type="inferred from homology"/>
<evidence type="ECO:0000255" key="1">
    <source>
        <dbReference type="HAMAP-Rule" id="MF_00539"/>
    </source>
</evidence>
<evidence type="ECO:0000256" key="2">
    <source>
        <dbReference type="SAM" id="MobiDB-lite"/>
    </source>
</evidence>
<evidence type="ECO:0000305" key="3"/>
<feature type="chain" id="PRO_1000017433" description="Large ribosomal subunit protein bL27">
    <location>
        <begin position="1"/>
        <end position="87"/>
    </location>
</feature>
<feature type="region of interest" description="Disordered" evidence="2">
    <location>
        <begin position="1"/>
        <end position="21"/>
    </location>
</feature>